<proteinExistence type="inferred from homology"/>
<accession>Q81N10</accession>
<accession>Q6HW71</accession>
<accession>Q6KQC6</accession>
<feature type="chain" id="PRO_0000163600" description="1-deoxy-D-xylulose 5-phosphate reductoisomerase 1">
    <location>
        <begin position="1"/>
        <end position="385"/>
    </location>
</feature>
<feature type="binding site" evidence="1">
    <location>
        <position position="11"/>
    </location>
    <ligand>
        <name>NADPH</name>
        <dbReference type="ChEBI" id="CHEBI:57783"/>
    </ligand>
</feature>
<feature type="binding site" evidence="1">
    <location>
        <position position="12"/>
    </location>
    <ligand>
        <name>NADPH</name>
        <dbReference type="ChEBI" id="CHEBI:57783"/>
    </ligand>
</feature>
<feature type="binding site" evidence="1">
    <location>
        <position position="13"/>
    </location>
    <ligand>
        <name>NADPH</name>
        <dbReference type="ChEBI" id="CHEBI:57783"/>
    </ligand>
</feature>
<feature type="binding site" evidence="1">
    <location>
        <position position="14"/>
    </location>
    <ligand>
        <name>NADPH</name>
        <dbReference type="ChEBI" id="CHEBI:57783"/>
    </ligand>
</feature>
<feature type="binding site" evidence="1">
    <location>
        <position position="39"/>
    </location>
    <ligand>
        <name>NADPH</name>
        <dbReference type="ChEBI" id="CHEBI:57783"/>
    </ligand>
</feature>
<feature type="binding site" evidence="1">
    <location>
        <position position="122"/>
    </location>
    <ligand>
        <name>NADPH</name>
        <dbReference type="ChEBI" id="CHEBI:57783"/>
    </ligand>
</feature>
<feature type="binding site" evidence="1">
    <location>
        <position position="123"/>
    </location>
    <ligand>
        <name>1-deoxy-D-xylulose 5-phosphate</name>
        <dbReference type="ChEBI" id="CHEBI:57792"/>
    </ligand>
</feature>
<feature type="binding site" evidence="1">
    <location>
        <position position="124"/>
    </location>
    <ligand>
        <name>NADPH</name>
        <dbReference type="ChEBI" id="CHEBI:57783"/>
    </ligand>
</feature>
<feature type="binding site" evidence="1">
    <location>
        <position position="148"/>
    </location>
    <ligand>
        <name>Mn(2+)</name>
        <dbReference type="ChEBI" id="CHEBI:29035"/>
    </ligand>
</feature>
<feature type="binding site" evidence="1">
    <location>
        <position position="149"/>
    </location>
    <ligand>
        <name>1-deoxy-D-xylulose 5-phosphate</name>
        <dbReference type="ChEBI" id="CHEBI:57792"/>
    </ligand>
</feature>
<feature type="binding site" evidence="1">
    <location>
        <position position="150"/>
    </location>
    <ligand>
        <name>1-deoxy-D-xylulose 5-phosphate</name>
        <dbReference type="ChEBI" id="CHEBI:57792"/>
    </ligand>
</feature>
<feature type="binding site" evidence="1">
    <location>
        <position position="150"/>
    </location>
    <ligand>
        <name>Mn(2+)</name>
        <dbReference type="ChEBI" id="CHEBI:29035"/>
    </ligand>
</feature>
<feature type="binding site" evidence="1">
    <location>
        <position position="174"/>
    </location>
    <ligand>
        <name>1-deoxy-D-xylulose 5-phosphate</name>
        <dbReference type="ChEBI" id="CHEBI:57792"/>
    </ligand>
</feature>
<feature type="binding site" evidence="1">
    <location>
        <position position="197"/>
    </location>
    <ligand>
        <name>1-deoxy-D-xylulose 5-phosphate</name>
        <dbReference type="ChEBI" id="CHEBI:57792"/>
    </ligand>
</feature>
<feature type="binding site" evidence="1">
    <location>
        <position position="203"/>
    </location>
    <ligand>
        <name>NADPH</name>
        <dbReference type="ChEBI" id="CHEBI:57783"/>
    </ligand>
</feature>
<feature type="binding site" evidence="1">
    <location>
        <position position="210"/>
    </location>
    <ligand>
        <name>1-deoxy-D-xylulose 5-phosphate</name>
        <dbReference type="ChEBI" id="CHEBI:57792"/>
    </ligand>
</feature>
<feature type="binding site" evidence="1">
    <location>
        <position position="215"/>
    </location>
    <ligand>
        <name>1-deoxy-D-xylulose 5-phosphate</name>
        <dbReference type="ChEBI" id="CHEBI:57792"/>
    </ligand>
</feature>
<feature type="binding site" evidence="1">
    <location>
        <position position="216"/>
    </location>
    <ligand>
        <name>1-deoxy-D-xylulose 5-phosphate</name>
        <dbReference type="ChEBI" id="CHEBI:57792"/>
    </ligand>
</feature>
<feature type="binding site" evidence="1">
    <location>
        <position position="219"/>
    </location>
    <ligand>
        <name>1-deoxy-D-xylulose 5-phosphate</name>
        <dbReference type="ChEBI" id="CHEBI:57792"/>
    </ligand>
</feature>
<feature type="binding site" evidence="1">
    <location>
        <position position="219"/>
    </location>
    <ligand>
        <name>Mn(2+)</name>
        <dbReference type="ChEBI" id="CHEBI:29035"/>
    </ligand>
</feature>
<name>DXR1_BACAN</name>
<dbReference type="EC" id="1.1.1.267" evidence="1"/>
<dbReference type="EMBL" id="AE016879">
    <property type="protein sequence ID" value="AAP27179.1"/>
    <property type="molecule type" value="Genomic_DNA"/>
</dbReference>
<dbReference type="EMBL" id="AE017334">
    <property type="protein sequence ID" value="AAT32518.1"/>
    <property type="molecule type" value="Genomic_DNA"/>
</dbReference>
<dbReference type="EMBL" id="AE017225">
    <property type="protein sequence ID" value="AAT55468.1"/>
    <property type="molecule type" value="Genomic_DNA"/>
</dbReference>
<dbReference type="RefSeq" id="NP_845693.1">
    <property type="nucleotide sequence ID" value="NC_003997.3"/>
</dbReference>
<dbReference type="RefSeq" id="WP_000241808.1">
    <property type="nucleotide sequence ID" value="NZ_WXXJ01000007.1"/>
</dbReference>
<dbReference type="RefSeq" id="YP_029417.1">
    <property type="nucleotide sequence ID" value="NC_005945.1"/>
</dbReference>
<dbReference type="SMR" id="Q81N10"/>
<dbReference type="STRING" id="261594.GBAA_3409"/>
<dbReference type="DNASU" id="1085180"/>
<dbReference type="GeneID" id="45023161"/>
<dbReference type="KEGG" id="ban:BA_3409"/>
<dbReference type="KEGG" id="banh:HYU01_16710"/>
<dbReference type="KEGG" id="bar:GBAA_3409"/>
<dbReference type="KEGG" id="bat:BAS3160"/>
<dbReference type="PATRIC" id="fig|198094.11.peg.3384"/>
<dbReference type="eggNOG" id="COG0743">
    <property type="taxonomic scope" value="Bacteria"/>
</dbReference>
<dbReference type="HOGENOM" id="CLU_035714_4_0_9"/>
<dbReference type="OMA" id="FIDGSVM"/>
<dbReference type="OrthoDB" id="9806546at2"/>
<dbReference type="UniPathway" id="UPA00056">
    <property type="reaction ID" value="UER00092"/>
</dbReference>
<dbReference type="Proteomes" id="UP000000427">
    <property type="component" value="Chromosome"/>
</dbReference>
<dbReference type="Proteomes" id="UP000000594">
    <property type="component" value="Chromosome"/>
</dbReference>
<dbReference type="GO" id="GO:0030604">
    <property type="term" value="F:1-deoxy-D-xylulose-5-phosphate reductoisomerase activity"/>
    <property type="evidence" value="ECO:0007669"/>
    <property type="project" value="UniProtKB-UniRule"/>
</dbReference>
<dbReference type="GO" id="GO:0030145">
    <property type="term" value="F:manganese ion binding"/>
    <property type="evidence" value="ECO:0007669"/>
    <property type="project" value="TreeGrafter"/>
</dbReference>
<dbReference type="GO" id="GO:0070402">
    <property type="term" value="F:NADPH binding"/>
    <property type="evidence" value="ECO:0007669"/>
    <property type="project" value="InterPro"/>
</dbReference>
<dbReference type="GO" id="GO:0051484">
    <property type="term" value="P:isopentenyl diphosphate biosynthetic process, methylerythritol 4-phosphate pathway involved in terpenoid biosynthetic process"/>
    <property type="evidence" value="ECO:0007669"/>
    <property type="project" value="TreeGrafter"/>
</dbReference>
<dbReference type="FunFam" id="3.40.50.720:FF:000045">
    <property type="entry name" value="1-deoxy-D-xylulose 5-phosphate reductoisomerase"/>
    <property type="match status" value="1"/>
</dbReference>
<dbReference type="Gene3D" id="1.10.1740.10">
    <property type="match status" value="1"/>
</dbReference>
<dbReference type="Gene3D" id="3.40.50.720">
    <property type="entry name" value="NAD(P)-binding Rossmann-like Domain"/>
    <property type="match status" value="1"/>
</dbReference>
<dbReference type="HAMAP" id="MF_00183">
    <property type="entry name" value="DXP_reductoisom"/>
    <property type="match status" value="1"/>
</dbReference>
<dbReference type="InterPro" id="IPR003821">
    <property type="entry name" value="DXP_reductoisomerase"/>
</dbReference>
<dbReference type="InterPro" id="IPR013644">
    <property type="entry name" value="DXP_reductoisomerase_C"/>
</dbReference>
<dbReference type="InterPro" id="IPR013512">
    <property type="entry name" value="DXP_reductoisomerase_N"/>
</dbReference>
<dbReference type="InterPro" id="IPR026877">
    <property type="entry name" value="DXPR_C"/>
</dbReference>
<dbReference type="InterPro" id="IPR036169">
    <property type="entry name" value="DXPR_C_sf"/>
</dbReference>
<dbReference type="InterPro" id="IPR036291">
    <property type="entry name" value="NAD(P)-bd_dom_sf"/>
</dbReference>
<dbReference type="NCBIfam" id="TIGR00243">
    <property type="entry name" value="Dxr"/>
    <property type="match status" value="1"/>
</dbReference>
<dbReference type="NCBIfam" id="NF009114">
    <property type="entry name" value="PRK12464.1"/>
    <property type="match status" value="1"/>
</dbReference>
<dbReference type="PANTHER" id="PTHR30525">
    <property type="entry name" value="1-DEOXY-D-XYLULOSE 5-PHOSPHATE REDUCTOISOMERASE"/>
    <property type="match status" value="1"/>
</dbReference>
<dbReference type="PANTHER" id="PTHR30525:SF0">
    <property type="entry name" value="1-DEOXY-D-XYLULOSE 5-PHOSPHATE REDUCTOISOMERASE, CHLOROPLASTIC"/>
    <property type="match status" value="1"/>
</dbReference>
<dbReference type="Pfam" id="PF08436">
    <property type="entry name" value="DXP_redisom_C"/>
    <property type="match status" value="1"/>
</dbReference>
<dbReference type="Pfam" id="PF02670">
    <property type="entry name" value="DXP_reductoisom"/>
    <property type="match status" value="1"/>
</dbReference>
<dbReference type="Pfam" id="PF13288">
    <property type="entry name" value="DXPR_C"/>
    <property type="match status" value="1"/>
</dbReference>
<dbReference type="PIRSF" id="PIRSF006205">
    <property type="entry name" value="Dxp_reductismrs"/>
    <property type="match status" value="1"/>
</dbReference>
<dbReference type="SUPFAM" id="SSF69055">
    <property type="entry name" value="1-deoxy-D-xylulose-5-phosphate reductoisomerase, C-terminal domain"/>
    <property type="match status" value="1"/>
</dbReference>
<dbReference type="SUPFAM" id="SSF55347">
    <property type="entry name" value="Glyceraldehyde-3-phosphate dehydrogenase-like, C-terminal domain"/>
    <property type="match status" value="1"/>
</dbReference>
<dbReference type="SUPFAM" id="SSF51735">
    <property type="entry name" value="NAD(P)-binding Rossmann-fold domains"/>
    <property type="match status" value="1"/>
</dbReference>
<comment type="function">
    <text evidence="1">Catalyzes the NADPH-dependent rearrangement and reduction of 1-deoxy-D-xylulose-5-phosphate (DXP) to 2-C-methyl-D-erythritol 4-phosphate (MEP).</text>
</comment>
<comment type="catalytic activity">
    <reaction evidence="1">
        <text>2-C-methyl-D-erythritol 4-phosphate + NADP(+) = 1-deoxy-D-xylulose 5-phosphate + NADPH + H(+)</text>
        <dbReference type="Rhea" id="RHEA:13717"/>
        <dbReference type="ChEBI" id="CHEBI:15378"/>
        <dbReference type="ChEBI" id="CHEBI:57783"/>
        <dbReference type="ChEBI" id="CHEBI:57792"/>
        <dbReference type="ChEBI" id="CHEBI:58262"/>
        <dbReference type="ChEBI" id="CHEBI:58349"/>
        <dbReference type="EC" id="1.1.1.267"/>
    </reaction>
    <physiologicalReaction direction="right-to-left" evidence="1">
        <dbReference type="Rhea" id="RHEA:13719"/>
    </physiologicalReaction>
</comment>
<comment type="cofactor">
    <cofactor evidence="1">
        <name>Mg(2+)</name>
        <dbReference type="ChEBI" id="CHEBI:18420"/>
    </cofactor>
    <cofactor evidence="1">
        <name>Mn(2+)</name>
        <dbReference type="ChEBI" id="CHEBI:29035"/>
    </cofactor>
</comment>
<comment type="pathway">
    <text evidence="1">Isoprenoid biosynthesis; isopentenyl diphosphate biosynthesis via DXP pathway; isopentenyl diphosphate from 1-deoxy-D-xylulose 5-phosphate: step 1/6.</text>
</comment>
<comment type="similarity">
    <text evidence="1">Belongs to the DXR family.</text>
</comment>
<evidence type="ECO:0000255" key="1">
    <source>
        <dbReference type="HAMAP-Rule" id="MF_00183"/>
    </source>
</evidence>
<organism>
    <name type="scientific">Bacillus anthracis</name>
    <dbReference type="NCBI Taxonomy" id="1392"/>
    <lineage>
        <taxon>Bacteria</taxon>
        <taxon>Bacillati</taxon>
        <taxon>Bacillota</taxon>
        <taxon>Bacilli</taxon>
        <taxon>Bacillales</taxon>
        <taxon>Bacillaceae</taxon>
        <taxon>Bacillus</taxon>
        <taxon>Bacillus cereus group</taxon>
    </lineage>
</organism>
<sequence length="385" mass="42557">MVKYISILGSTGSIGTSALDVVSAHPEHFKIVGLTANYNIELLEQQIKTFQPRIVSVATKELADTLRTRISTNTKITYGTDGLIAVATHPNSNLVLSSVVGVSGLLPTIEALKAKKDIAIANKETLVAAGHIVTELAKQNGCRLIPVDSEHSAIFQCLNGENNKEIDKLIVTASGGAFRDKTREEMKTLQAKDALKHPNWLMGAKLTIDSATLMNKGFEVMEARWLFDIPYEKINVMIHKESIIHSLVEFIDGSVIAQLGAPDMRMPIQYAFHYPTRLPSSYEKLNLLEIGSLHFEKPDLEKFPCLQYAYECGKIGGITPAVLNAANEIANALFLKNEIAFFDIEKTIYKTVEAHHNVKDPSLDAILEADQWARQYANQLLIKKS</sequence>
<protein>
    <recommendedName>
        <fullName evidence="1">1-deoxy-D-xylulose 5-phosphate reductoisomerase 1</fullName>
        <shortName evidence="1">DXP reductoisomerase 1</shortName>
        <ecNumber evidence="1">1.1.1.267</ecNumber>
    </recommendedName>
    <alternativeName>
        <fullName evidence="1">1-deoxyxylulose-5-phosphate reductoisomerase 1</fullName>
    </alternativeName>
    <alternativeName>
        <fullName evidence="1">2-C-methyl-D-erythritol 4-phosphate synthase 1</fullName>
    </alternativeName>
</protein>
<reference key="1">
    <citation type="journal article" date="2003" name="Nature">
        <title>The genome sequence of Bacillus anthracis Ames and comparison to closely related bacteria.</title>
        <authorList>
            <person name="Read T.D."/>
            <person name="Peterson S.N."/>
            <person name="Tourasse N.J."/>
            <person name="Baillie L.W."/>
            <person name="Paulsen I.T."/>
            <person name="Nelson K.E."/>
            <person name="Tettelin H."/>
            <person name="Fouts D.E."/>
            <person name="Eisen J.A."/>
            <person name="Gill S.R."/>
            <person name="Holtzapple E.K."/>
            <person name="Okstad O.A."/>
            <person name="Helgason E."/>
            <person name="Rilstone J."/>
            <person name="Wu M."/>
            <person name="Kolonay J.F."/>
            <person name="Beanan M.J."/>
            <person name="Dodson R.J."/>
            <person name="Brinkac L.M."/>
            <person name="Gwinn M.L."/>
            <person name="DeBoy R.T."/>
            <person name="Madpu R."/>
            <person name="Daugherty S.C."/>
            <person name="Durkin A.S."/>
            <person name="Haft D.H."/>
            <person name="Nelson W.C."/>
            <person name="Peterson J.D."/>
            <person name="Pop M."/>
            <person name="Khouri H.M."/>
            <person name="Radune D."/>
            <person name="Benton J.L."/>
            <person name="Mahamoud Y."/>
            <person name="Jiang L."/>
            <person name="Hance I.R."/>
            <person name="Weidman J.F."/>
            <person name="Berry K.J."/>
            <person name="Plaut R.D."/>
            <person name="Wolf A.M."/>
            <person name="Watkins K.L."/>
            <person name="Nierman W.C."/>
            <person name="Hazen A."/>
            <person name="Cline R.T."/>
            <person name="Redmond C."/>
            <person name="Thwaite J.E."/>
            <person name="White O."/>
            <person name="Salzberg S.L."/>
            <person name="Thomason B."/>
            <person name="Friedlander A.M."/>
            <person name="Koehler T.M."/>
            <person name="Hanna P.C."/>
            <person name="Kolstoe A.-B."/>
            <person name="Fraser C.M."/>
        </authorList>
    </citation>
    <scope>NUCLEOTIDE SEQUENCE [LARGE SCALE GENOMIC DNA]</scope>
    <source>
        <strain>Ames / isolate Porton</strain>
    </source>
</reference>
<reference key="2">
    <citation type="journal article" date="2009" name="J. Bacteriol.">
        <title>The complete genome sequence of Bacillus anthracis Ames 'Ancestor'.</title>
        <authorList>
            <person name="Ravel J."/>
            <person name="Jiang L."/>
            <person name="Stanley S.T."/>
            <person name="Wilson M.R."/>
            <person name="Decker R.S."/>
            <person name="Read T.D."/>
            <person name="Worsham P."/>
            <person name="Keim P.S."/>
            <person name="Salzberg S.L."/>
            <person name="Fraser-Liggett C.M."/>
            <person name="Rasko D.A."/>
        </authorList>
    </citation>
    <scope>NUCLEOTIDE SEQUENCE [LARGE SCALE GENOMIC DNA]</scope>
    <source>
        <strain>Ames ancestor</strain>
    </source>
</reference>
<reference key="3">
    <citation type="submission" date="2004-01" db="EMBL/GenBank/DDBJ databases">
        <title>Complete genome sequence of Bacillus anthracis Sterne.</title>
        <authorList>
            <person name="Brettin T.S."/>
            <person name="Bruce D."/>
            <person name="Challacombe J.F."/>
            <person name="Gilna P."/>
            <person name="Han C."/>
            <person name="Hill K."/>
            <person name="Hitchcock P."/>
            <person name="Jackson P."/>
            <person name="Keim P."/>
            <person name="Longmire J."/>
            <person name="Lucas S."/>
            <person name="Okinaka R."/>
            <person name="Richardson P."/>
            <person name="Rubin E."/>
            <person name="Tice H."/>
        </authorList>
    </citation>
    <scope>NUCLEOTIDE SEQUENCE [LARGE SCALE GENOMIC DNA]</scope>
    <source>
        <strain>Sterne</strain>
    </source>
</reference>
<keyword id="KW-0414">Isoprene biosynthesis</keyword>
<keyword id="KW-0464">Manganese</keyword>
<keyword id="KW-0479">Metal-binding</keyword>
<keyword id="KW-0521">NADP</keyword>
<keyword id="KW-0560">Oxidoreductase</keyword>
<keyword id="KW-1185">Reference proteome</keyword>
<gene>
    <name evidence="1" type="primary">dxr1</name>
    <name type="synonym">dxr-1</name>
    <name type="ordered locus">BA_3409</name>
    <name type="ordered locus">GBAA_3409</name>
    <name type="ordered locus">BAS3160</name>
</gene>